<accession>Q5HUT8</accession>
<comment type="function">
    <text evidence="1">Cell wall formation. Adds enolpyruvyl to UDP-N-acetylglucosamine.</text>
</comment>
<comment type="catalytic activity">
    <reaction evidence="1">
        <text>phosphoenolpyruvate + UDP-N-acetyl-alpha-D-glucosamine = UDP-N-acetyl-3-O-(1-carboxyvinyl)-alpha-D-glucosamine + phosphate</text>
        <dbReference type="Rhea" id="RHEA:18681"/>
        <dbReference type="ChEBI" id="CHEBI:43474"/>
        <dbReference type="ChEBI" id="CHEBI:57705"/>
        <dbReference type="ChEBI" id="CHEBI:58702"/>
        <dbReference type="ChEBI" id="CHEBI:68483"/>
        <dbReference type="EC" id="2.5.1.7"/>
    </reaction>
</comment>
<comment type="pathway">
    <text evidence="1">Cell wall biogenesis; peptidoglycan biosynthesis.</text>
</comment>
<comment type="subcellular location">
    <subcellularLocation>
        <location evidence="1">Cytoplasm</location>
    </subcellularLocation>
</comment>
<comment type="similarity">
    <text evidence="1">Belongs to the EPSP synthase family. MurA subfamily.</text>
</comment>
<keyword id="KW-0131">Cell cycle</keyword>
<keyword id="KW-0132">Cell division</keyword>
<keyword id="KW-0133">Cell shape</keyword>
<keyword id="KW-0961">Cell wall biogenesis/degradation</keyword>
<keyword id="KW-0963">Cytoplasm</keyword>
<keyword id="KW-0573">Peptidoglycan synthesis</keyword>
<keyword id="KW-0670">Pyruvate</keyword>
<keyword id="KW-0808">Transferase</keyword>
<gene>
    <name evidence="1" type="primary">murA</name>
    <name type="ordered locus">CJE0945</name>
</gene>
<dbReference type="EC" id="2.5.1.7" evidence="1"/>
<dbReference type="EMBL" id="CP000025">
    <property type="protein sequence ID" value="AAW35282.1"/>
    <property type="molecule type" value="Genomic_DNA"/>
</dbReference>
<dbReference type="RefSeq" id="WP_002867472.1">
    <property type="nucleotide sequence ID" value="NC_003912.7"/>
</dbReference>
<dbReference type="SMR" id="Q5HUT8"/>
<dbReference type="KEGG" id="cjr:CJE0945"/>
<dbReference type="HOGENOM" id="CLU_027387_0_0_7"/>
<dbReference type="UniPathway" id="UPA00219"/>
<dbReference type="GO" id="GO:0005737">
    <property type="term" value="C:cytoplasm"/>
    <property type="evidence" value="ECO:0007669"/>
    <property type="project" value="UniProtKB-SubCell"/>
</dbReference>
<dbReference type="GO" id="GO:0008760">
    <property type="term" value="F:UDP-N-acetylglucosamine 1-carboxyvinyltransferase activity"/>
    <property type="evidence" value="ECO:0007669"/>
    <property type="project" value="UniProtKB-UniRule"/>
</dbReference>
<dbReference type="GO" id="GO:0051301">
    <property type="term" value="P:cell division"/>
    <property type="evidence" value="ECO:0007669"/>
    <property type="project" value="UniProtKB-KW"/>
</dbReference>
<dbReference type="GO" id="GO:0071555">
    <property type="term" value="P:cell wall organization"/>
    <property type="evidence" value="ECO:0007669"/>
    <property type="project" value="UniProtKB-KW"/>
</dbReference>
<dbReference type="GO" id="GO:0009252">
    <property type="term" value="P:peptidoglycan biosynthetic process"/>
    <property type="evidence" value="ECO:0007669"/>
    <property type="project" value="UniProtKB-UniRule"/>
</dbReference>
<dbReference type="GO" id="GO:0008360">
    <property type="term" value="P:regulation of cell shape"/>
    <property type="evidence" value="ECO:0007669"/>
    <property type="project" value="UniProtKB-KW"/>
</dbReference>
<dbReference type="GO" id="GO:0019277">
    <property type="term" value="P:UDP-N-acetylgalactosamine biosynthetic process"/>
    <property type="evidence" value="ECO:0007669"/>
    <property type="project" value="InterPro"/>
</dbReference>
<dbReference type="CDD" id="cd01555">
    <property type="entry name" value="UdpNAET"/>
    <property type="match status" value="1"/>
</dbReference>
<dbReference type="FunFam" id="3.65.10.10:FF:000001">
    <property type="entry name" value="UDP-N-acetylglucosamine 1-carboxyvinyltransferase"/>
    <property type="match status" value="1"/>
</dbReference>
<dbReference type="Gene3D" id="3.65.10.10">
    <property type="entry name" value="Enolpyruvate transferase domain"/>
    <property type="match status" value="2"/>
</dbReference>
<dbReference type="HAMAP" id="MF_00111">
    <property type="entry name" value="MurA"/>
    <property type="match status" value="1"/>
</dbReference>
<dbReference type="InterPro" id="IPR001986">
    <property type="entry name" value="Enolpyruvate_Tfrase_dom"/>
</dbReference>
<dbReference type="InterPro" id="IPR036968">
    <property type="entry name" value="Enolpyruvate_Tfrase_sf"/>
</dbReference>
<dbReference type="InterPro" id="IPR050068">
    <property type="entry name" value="MurA_subfamily"/>
</dbReference>
<dbReference type="InterPro" id="IPR013792">
    <property type="entry name" value="RNA3'P_cycl/enolpyr_Trfase_a/b"/>
</dbReference>
<dbReference type="InterPro" id="IPR005750">
    <property type="entry name" value="UDP_GlcNAc_COvinyl_MurA"/>
</dbReference>
<dbReference type="NCBIfam" id="TIGR01072">
    <property type="entry name" value="murA"/>
    <property type="match status" value="1"/>
</dbReference>
<dbReference type="NCBIfam" id="NF006873">
    <property type="entry name" value="PRK09369.1"/>
    <property type="match status" value="1"/>
</dbReference>
<dbReference type="PANTHER" id="PTHR43783">
    <property type="entry name" value="UDP-N-ACETYLGLUCOSAMINE 1-CARBOXYVINYLTRANSFERASE"/>
    <property type="match status" value="1"/>
</dbReference>
<dbReference type="PANTHER" id="PTHR43783:SF1">
    <property type="entry name" value="UDP-N-ACETYLGLUCOSAMINE 1-CARBOXYVINYLTRANSFERASE"/>
    <property type="match status" value="1"/>
</dbReference>
<dbReference type="Pfam" id="PF00275">
    <property type="entry name" value="EPSP_synthase"/>
    <property type="match status" value="1"/>
</dbReference>
<dbReference type="SUPFAM" id="SSF55205">
    <property type="entry name" value="EPT/RTPC-like"/>
    <property type="match status" value="1"/>
</dbReference>
<evidence type="ECO:0000255" key="1">
    <source>
        <dbReference type="HAMAP-Rule" id="MF_00111"/>
    </source>
</evidence>
<reference key="1">
    <citation type="journal article" date="2005" name="PLoS Biol.">
        <title>Major structural differences and novel potential virulence mechanisms from the genomes of multiple Campylobacter species.</title>
        <authorList>
            <person name="Fouts D.E."/>
            <person name="Mongodin E.F."/>
            <person name="Mandrell R.E."/>
            <person name="Miller W.G."/>
            <person name="Rasko D.A."/>
            <person name="Ravel J."/>
            <person name="Brinkac L.M."/>
            <person name="DeBoy R.T."/>
            <person name="Parker C.T."/>
            <person name="Daugherty S.C."/>
            <person name="Dodson R.J."/>
            <person name="Durkin A.S."/>
            <person name="Madupu R."/>
            <person name="Sullivan S.A."/>
            <person name="Shetty J.U."/>
            <person name="Ayodeji M.A."/>
            <person name="Shvartsbeyn A."/>
            <person name="Schatz M.C."/>
            <person name="Badger J.H."/>
            <person name="Fraser C.M."/>
            <person name="Nelson K.E."/>
        </authorList>
    </citation>
    <scope>NUCLEOTIDE SEQUENCE [LARGE SCALE GENOMIC DNA]</scope>
    <source>
        <strain>RM1221</strain>
    </source>
</reference>
<proteinExistence type="inferred from homology"/>
<sequence length="418" mass="45126">MTYLEIEGTNHLSGNVTISGAKNAALPLIVSSILAKNEVKINNVPNVADIKTLISLLENLGAKVNFQNNSALLNTNTLNQTIAKYDIVRKMRASILTLGPLLARFGHCEVSLPGGCAIGQRPIDLHLLALEKMGANIQIKQGYVVASGNLKGNEILFDKITVTGSENIIMAAALAKGKTKLLNVAKEPEVVQLCEVLKDAGLEIKGIGTDELEIYGSDGELLEFKEFSVIPDRIEAGTYLCAGAITNSKITLDKVNATHLSAVLAKLHQMGFETLIAEDSITLLPAKEIKPVEIMTSEYPGFPTDMQAQFMALALKANGTSIIDERLFENRFMHVSELLRMGADIKLNGHIATIVGGKELNAADVMATDLRASSALILAALAAKGTSKVHRIYHLDRGYENLEEKFKGLGVKITRLEE</sequence>
<protein>
    <recommendedName>
        <fullName evidence="1">UDP-N-acetylglucosamine 1-carboxyvinyltransferase</fullName>
        <ecNumber evidence="1">2.5.1.7</ecNumber>
    </recommendedName>
    <alternativeName>
        <fullName evidence="1">Enoylpyruvate transferase</fullName>
    </alternativeName>
    <alternativeName>
        <fullName evidence="1">UDP-N-acetylglucosamine enolpyruvyl transferase</fullName>
        <shortName evidence="1">EPT</shortName>
    </alternativeName>
</protein>
<organism>
    <name type="scientific">Campylobacter jejuni (strain RM1221)</name>
    <dbReference type="NCBI Taxonomy" id="195099"/>
    <lineage>
        <taxon>Bacteria</taxon>
        <taxon>Pseudomonadati</taxon>
        <taxon>Campylobacterota</taxon>
        <taxon>Epsilonproteobacteria</taxon>
        <taxon>Campylobacterales</taxon>
        <taxon>Campylobacteraceae</taxon>
        <taxon>Campylobacter</taxon>
    </lineage>
</organism>
<name>MURA_CAMJR</name>
<feature type="chain" id="PRO_0000178857" description="UDP-N-acetylglucosamine 1-carboxyvinyltransferase">
    <location>
        <begin position="1"/>
        <end position="418"/>
    </location>
</feature>
<feature type="active site" description="Proton donor" evidence="1">
    <location>
        <position position="116"/>
    </location>
</feature>
<feature type="binding site" evidence="1">
    <location>
        <begin position="22"/>
        <end position="23"/>
    </location>
    <ligand>
        <name>phosphoenolpyruvate</name>
        <dbReference type="ChEBI" id="CHEBI:58702"/>
    </ligand>
</feature>
<feature type="binding site" evidence="1">
    <location>
        <position position="92"/>
    </location>
    <ligand>
        <name>UDP-N-acetyl-alpha-D-glucosamine</name>
        <dbReference type="ChEBI" id="CHEBI:57705"/>
    </ligand>
</feature>
<feature type="binding site" evidence="1">
    <location>
        <begin position="121"/>
        <end position="125"/>
    </location>
    <ligand>
        <name>UDP-N-acetyl-alpha-D-glucosamine</name>
        <dbReference type="ChEBI" id="CHEBI:57705"/>
    </ligand>
</feature>
<feature type="binding site" evidence="1">
    <location>
        <position position="305"/>
    </location>
    <ligand>
        <name>UDP-N-acetyl-alpha-D-glucosamine</name>
        <dbReference type="ChEBI" id="CHEBI:57705"/>
    </ligand>
</feature>
<feature type="binding site" evidence="1">
    <location>
        <position position="327"/>
    </location>
    <ligand>
        <name>UDP-N-acetyl-alpha-D-glucosamine</name>
        <dbReference type="ChEBI" id="CHEBI:57705"/>
    </ligand>
</feature>
<feature type="modified residue" description="2-(S-cysteinyl)pyruvic acid O-phosphothioketal" evidence="1">
    <location>
        <position position="116"/>
    </location>
</feature>